<sequence length="633" mass="71569">MKSNYSATNIKILKGLDAVKKRPGMYIGSTDSKGLHHMLWEILANSVDEVLAGYATNITVTLDLNNTITVSDDGRGIPYEIHQDSNISTIDTVFTFLHAGGKFDDQSYKLAGGLHGVGASVVNALSDHLEVTVKRNGQIYQSVYQAGGKIIQKAKKIGDTTSHGTTVSFHADPKVFKKAQFDSNIIKSRLKELSFLFAKLKLTFTDQKTNKTTVFFSTSGLVQFLDEINNTVETLGQKTLIKGEKDGIEVEVVFQFNQSDQETILSFANSIKTFEGGSHENGFCLAISDVINSYCRKYNLLKEKDKNFQLSEIRQGLNAIIKVNLPEKNIAFEGQTKSKLFSKEVKNVVYELVQQHYFQFLERNNNDAKLIIDKLLNARKIKEQIKQQRELKKSLSSPQKEKILFGKLAPCQTKKTSEKELFIVEGDSAGGTAKMGRDRIFQAILPLRGKVLNVEKINNKKEAITNEEILTLIFCIGTGILTNFNIKDLKYGKIIIMTDADNDGAHIQILLLTFFYRYMQPLIELGHVYLALPPLYKLETKDRKTVKYLWSDLELESVKLKLNNFTLQRYKGLGEMNADQLWDTTMNPTTRKLVQVKLDDLINAEKQINIFMGEKSDLRKHWIEANINFSVEN</sequence>
<accession>P47445</accession>
<feature type="chain" id="PRO_0000145432" description="DNA topoisomerase 4 subunit B">
    <location>
        <begin position="1"/>
        <end position="633"/>
    </location>
</feature>
<feature type="domain" description="Toprim" evidence="1">
    <location>
        <begin position="419"/>
        <end position="534"/>
    </location>
</feature>
<feature type="binding site" evidence="1">
    <location>
        <position position="5"/>
    </location>
    <ligand>
        <name>ATP</name>
        <dbReference type="ChEBI" id="CHEBI:30616"/>
    </ligand>
</feature>
<feature type="binding site" evidence="1">
    <location>
        <position position="45"/>
    </location>
    <ligand>
        <name>ATP</name>
        <dbReference type="ChEBI" id="CHEBI:30616"/>
    </ligand>
</feature>
<feature type="binding site" evidence="1">
    <location>
        <position position="72"/>
    </location>
    <ligand>
        <name>ATP</name>
        <dbReference type="ChEBI" id="CHEBI:30616"/>
    </ligand>
</feature>
<feature type="binding site" evidence="1">
    <location>
        <begin position="113"/>
        <end position="119"/>
    </location>
    <ligand>
        <name>ATP</name>
        <dbReference type="ChEBI" id="CHEBI:30616"/>
    </ligand>
</feature>
<feature type="binding site" evidence="1">
    <location>
        <position position="337"/>
    </location>
    <ligand>
        <name>ATP</name>
        <dbReference type="ChEBI" id="CHEBI:30616"/>
    </ligand>
</feature>
<feature type="binding site" evidence="1">
    <location>
        <position position="425"/>
    </location>
    <ligand>
        <name>Mg(2+)</name>
        <dbReference type="ChEBI" id="CHEBI:18420"/>
        <label>1</label>
        <note>catalytic</note>
    </ligand>
</feature>
<feature type="binding site" evidence="1">
    <location>
        <position position="499"/>
    </location>
    <ligand>
        <name>Mg(2+)</name>
        <dbReference type="ChEBI" id="CHEBI:18420"/>
        <label>1</label>
        <note>catalytic</note>
    </ligand>
</feature>
<feature type="binding site" evidence="1">
    <location>
        <position position="499"/>
    </location>
    <ligand>
        <name>Mg(2+)</name>
        <dbReference type="ChEBI" id="CHEBI:18420"/>
        <label>2</label>
    </ligand>
</feature>
<feature type="binding site" evidence="1">
    <location>
        <position position="501"/>
    </location>
    <ligand>
        <name>Mg(2+)</name>
        <dbReference type="ChEBI" id="CHEBI:18420"/>
        <label>2</label>
    </ligand>
</feature>
<feature type="site" description="Interaction with DNA" evidence="1">
    <location>
        <position position="450"/>
    </location>
</feature>
<feature type="site" description="Interaction with DNA" evidence="1">
    <location>
        <position position="453"/>
    </location>
</feature>
<feature type="site" description="Interaction with DNA" evidence="1">
    <location>
        <position position="506"/>
    </location>
</feature>
<feature type="site" description="Interaction with DNA" evidence="1">
    <location>
        <position position="619"/>
    </location>
</feature>
<keyword id="KW-0067">ATP-binding</keyword>
<keyword id="KW-0238">DNA-binding</keyword>
<keyword id="KW-0413">Isomerase</keyword>
<keyword id="KW-0460">Magnesium</keyword>
<keyword id="KW-0479">Metal-binding</keyword>
<keyword id="KW-0547">Nucleotide-binding</keyword>
<keyword id="KW-1185">Reference proteome</keyword>
<keyword id="KW-0799">Topoisomerase</keyword>
<gene>
    <name evidence="1" type="primary">parE</name>
    <name type="ordered locus">MG203</name>
</gene>
<name>PARE_MYCGE</name>
<comment type="function">
    <text evidence="1">Topoisomerase IV is essential for chromosome segregation. It relaxes supercoiled DNA. Performs the decatenation events required during the replication of a circular DNA molecule.</text>
</comment>
<comment type="catalytic activity">
    <reaction evidence="1">
        <text>ATP-dependent breakage, passage and rejoining of double-stranded DNA.</text>
        <dbReference type="EC" id="5.6.2.2"/>
    </reaction>
</comment>
<comment type="cofactor">
    <cofactor evidence="1">
        <name>Mg(2+)</name>
        <dbReference type="ChEBI" id="CHEBI:18420"/>
    </cofactor>
    <cofactor evidence="1">
        <name>Mn(2+)</name>
        <dbReference type="ChEBI" id="CHEBI:29035"/>
    </cofactor>
    <cofactor evidence="1">
        <name>Ca(2+)</name>
        <dbReference type="ChEBI" id="CHEBI:29108"/>
    </cofactor>
    <text evidence="1">Binds two Mg(2+) per subunit. The magnesium ions form salt bridges with both the protein and the DNA. Can also accept other divalent metal cations, such as Mn(2+) or Ca(2+).</text>
</comment>
<comment type="subunit">
    <text evidence="1">Heterotetramer composed of ParC and ParE.</text>
</comment>
<comment type="similarity">
    <text evidence="1">Belongs to the type II topoisomerase family. ParE type 2 subfamily.</text>
</comment>
<reference key="1">
    <citation type="journal article" date="1995" name="Science">
        <title>The minimal gene complement of Mycoplasma genitalium.</title>
        <authorList>
            <person name="Fraser C.M."/>
            <person name="Gocayne J.D."/>
            <person name="White O."/>
            <person name="Adams M.D."/>
            <person name="Clayton R.A."/>
            <person name="Fleischmann R.D."/>
            <person name="Bult C.J."/>
            <person name="Kerlavage A.R."/>
            <person name="Sutton G.G."/>
            <person name="Kelley J.M."/>
            <person name="Fritchman J.L."/>
            <person name="Weidman J.F."/>
            <person name="Small K.V."/>
            <person name="Sandusky M."/>
            <person name="Fuhrmann J.L."/>
            <person name="Nguyen D.T."/>
            <person name="Utterback T.R."/>
            <person name="Saudek D.M."/>
            <person name="Phillips C.A."/>
            <person name="Merrick J.M."/>
            <person name="Tomb J.-F."/>
            <person name="Dougherty B.A."/>
            <person name="Bott K.F."/>
            <person name="Hu P.-C."/>
            <person name="Lucier T.S."/>
            <person name="Peterson S.N."/>
            <person name="Smith H.O."/>
            <person name="Hutchison C.A. III"/>
            <person name="Venter J.C."/>
        </authorList>
    </citation>
    <scope>NUCLEOTIDE SEQUENCE [LARGE SCALE GENOMIC DNA]</scope>
    <source>
        <strain>ATCC 33530 / DSM 19775 / NCTC 10195 / G37</strain>
    </source>
</reference>
<reference key="2">
    <citation type="submission" date="1995-05" db="EMBL/GenBank/DDBJ databases">
        <authorList>
            <person name="Bailey C.C."/>
            <person name="Younkins R."/>
            <person name="Huang W.M."/>
            <person name="Bott K.F."/>
        </authorList>
    </citation>
    <scope>NUCLEOTIDE SEQUENCE [GENOMIC DNA] OF 406-633</scope>
    <source>
        <strain>ATCC 33530 / DSM 19775 / NCTC 10195 / G37</strain>
    </source>
</reference>
<protein>
    <recommendedName>
        <fullName evidence="1">DNA topoisomerase 4 subunit B</fullName>
        <ecNumber evidence="1">5.6.2.2</ecNumber>
    </recommendedName>
    <alternativeName>
        <fullName evidence="1">Topoisomerase IV subunit B</fullName>
    </alternativeName>
</protein>
<evidence type="ECO:0000255" key="1">
    <source>
        <dbReference type="HAMAP-Rule" id="MF_00939"/>
    </source>
</evidence>
<organism>
    <name type="scientific">Mycoplasma genitalium (strain ATCC 33530 / DSM 19775 / NCTC 10195 / G37)</name>
    <name type="common">Mycoplasmoides genitalium</name>
    <dbReference type="NCBI Taxonomy" id="243273"/>
    <lineage>
        <taxon>Bacteria</taxon>
        <taxon>Bacillati</taxon>
        <taxon>Mycoplasmatota</taxon>
        <taxon>Mycoplasmoidales</taxon>
        <taxon>Mycoplasmoidaceae</taxon>
        <taxon>Mycoplasmoides</taxon>
    </lineage>
</organism>
<proteinExistence type="inferred from homology"/>
<dbReference type="EC" id="5.6.2.2" evidence="1"/>
<dbReference type="EMBL" id="L43967">
    <property type="protein sequence ID" value="AAC71421.1"/>
    <property type="molecule type" value="Genomic_DNA"/>
</dbReference>
<dbReference type="EMBL" id="U25549">
    <property type="protein sequence ID" value="AAC43990.1"/>
    <property type="molecule type" value="Genomic_DNA"/>
</dbReference>
<dbReference type="PIR" id="D64222">
    <property type="entry name" value="D64222"/>
</dbReference>
<dbReference type="RefSeq" id="WP_010869371.1">
    <property type="nucleotide sequence ID" value="NC_000908.2"/>
</dbReference>
<dbReference type="SMR" id="P47445"/>
<dbReference type="STRING" id="243273.MG_203"/>
<dbReference type="GeneID" id="88282335"/>
<dbReference type="KEGG" id="mge:MG_203"/>
<dbReference type="eggNOG" id="COG0187">
    <property type="taxonomic scope" value="Bacteria"/>
</dbReference>
<dbReference type="HOGENOM" id="CLU_006146_4_1_14"/>
<dbReference type="InParanoid" id="P47445"/>
<dbReference type="OrthoDB" id="9802808at2"/>
<dbReference type="BioCyc" id="MGEN243273:G1GJ2-236-MONOMER"/>
<dbReference type="Proteomes" id="UP000000807">
    <property type="component" value="Chromosome"/>
</dbReference>
<dbReference type="GO" id="GO:0005694">
    <property type="term" value="C:chromosome"/>
    <property type="evidence" value="ECO:0007669"/>
    <property type="project" value="InterPro"/>
</dbReference>
<dbReference type="GO" id="GO:0005524">
    <property type="term" value="F:ATP binding"/>
    <property type="evidence" value="ECO:0007669"/>
    <property type="project" value="UniProtKB-KW"/>
</dbReference>
<dbReference type="GO" id="GO:0003677">
    <property type="term" value="F:DNA binding"/>
    <property type="evidence" value="ECO:0007669"/>
    <property type="project" value="UniProtKB-KW"/>
</dbReference>
<dbReference type="GO" id="GO:0034335">
    <property type="term" value="F:DNA negative supercoiling activity"/>
    <property type="evidence" value="ECO:0007669"/>
    <property type="project" value="UniProtKB-ARBA"/>
</dbReference>
<dbReference type="GO" id="GO:0046872">
    <property type="term" value="F:metal ion binding"/>
    <property type="evidence" value="ECO:0007669"/>
    <property type="project" value="UniProtKB-KW"/>
</dbReference>
<dbReference type="GO" id="GO:0006265">
    <property type="term" value="P:DNA topological change"/>
    <property type="evidence" value="ECO:0007669"/>
    <property type="project" value="InterPro"/>
</dbReference>
<dbReference type="CDD" id="cd16928">
    <property type="entry name" value="HATPase_GyrB-like"/>
    <property type="match status" value="1"/>
</dbReference>
<dbReference type="CDD" id="cd00822">
    <property type="entry name" value="TopoII_Trans_DNA_gyrase"/>
    <property type="match status" value="1"/>
</dbReference>
<dbReference type="FunFam" id="3.30.565.10:FF:000088">
    <property type="entry name" value="DNA topoisomerase (ATP-hydrolyzing)"/>
    <property type="match status" value="1"/>
</dbReference>
<dbReference type="FunFam" id="3.40.50.670:FF:000001">
    <property type="entry name" value="DNA topoisomerase 2"/>
    <property type="match status" value="1"/>
</dbReference>
<dbReference type="Gene3D" id="3.30.230.10">
    <property type="match status" value="1"/>
</dbReference>
<dbReference type="Gene3D" id="3.40.50.670">
    <property type="match status" value="1"/>
</dbReference>
<dbReference type="Gene3D" id="3.30.565.10">
    <property type="entry name" value="Histidine kinase-like ATPase, C-terminal domain"/>
    <property type="match status" value="1"/>
</dbReference>
<dbReference type="HAMAP" id="MF_00939">
    <property type="entry name" value="ParE_type2"/>
    <property type="match status" value="1"/>
</dbReference>
<dbReference type="InterPro" id="IPR002288">
    <property type="entry name" value="DNA_gyrase_B_C"/>
</dbReference>
<dbReference type="InterPro" id="IPR036890">
    <property type="entry name" value="HATPase_C_sf"/>
</dbReference>
<dbReference type="InterPro" id="IPR005740">
    <property type="entry name" value="ParE_type2"/>
</dbReference>
<dbReference type="InterPro" id="IPR020568">
    <property type="entry name" value="Ribosomal_Su5_D2-typ_SF"/>
</dbReference>
<dbReference type="InterPro" id="IPR014721">
    <property type="entry name" value="Ribsml_uS5_D2-typ_fold_subgr"/>
</dbReference>
<dbReference type="InterPro" id="IPR001241">
    <property type="entry name" value="Topo_IIA"/>
</dbReference>
<dbReference type="InterPro" id="IPR013760">
    <property type="entry name" value="Topo_IIA-like_dom_sf"/>
</dbReference>
<dbReference type="InterPro" id="IPR000565">
    <property type="entry name" value="Topo_IIA_B"/>
</dbReference>
<dbReference type="InterPro" id="IPR013759">
    <property type="entry name" value="Topo_IIA_B_C"/>
</dbReference>
<dbReference type="InterPro" id="IPR013506">
    <property type="entry name" value="Topo_IIA_bsu_dom2"/>
</dbReference>
<dbReference type="InterPro" id="IPR018522">
    <property type="entry name" value="TopoIIA_CS"/>
</dbReference>
<dbReference type="InterPro" id="IPR006171">
    <property type="entry name" value="TOPRIM_dom"/>
</dbReference>
<dbReference type="NCBIfam" id="TIGR01058">
    <property type="entry name" value="parE_Gpos"/>
    <property type="match status" value="1"/>
</dbReference>
<dbReference type="NCBIfam" id="NF004189">
    <property type="entry name" value="PRK05644.1"/>
    <property type="match status" value="1"/>
</dbReference>
<dbReference type="PANTHER" id="PTHR45866">
    <property type="entry name" value="DNA GYRASE/TOPOISOMERASE SUBUNIT B"/>
    <property type="match status" value="1"/>
</dbReference>
<dbReference type="PANTHER" id="PTHR45866:SF12">
    <property type="entry name" value="DNA TOPOISOMERASE 4 SUBUNIT B"/>
    <property type="match status" value="1"/>
</dbReference>
<dbReference type="Pfam" id="PF00204">
    <property type="entry name" value="DNA_gyraseB"/>
    <property type="match status" value="1"/>
</dbReference>
<dbReference type="Pfam" id="PF00986">
    <property type="entry name" value="DNA_gyraseB_C"/>
    <property type="match status" value="1"/>
</dbReference>
<dbReference type="Pfam" id="PF02518">
    <property type="entry name" value="HATPase_c"/>
    <property type="match status" value="1"/>
</dbReference>
<dbReference type="Pfam" id="PF01751">
    <property type="entry name" value="Toprim"/>
    <property type="match status" value="1"/>
</dbReference>
<dbReference type="PRINTS" id="PR01159">
    <property type="entry name" value="DNAGYRASEB"/>
</dbReference>
<dbReference type="PRINTS" id="PR00418">
    <property type="entry name" value="TPI2FAMILY"/>
</dbReference>
<dbReference type="SMART" id="SM00387">
    <property type="entry name" value="HATPase_c"/>
    <property type="match status" value="1"/>
</dbReference>
<dbReference type="SMART" id="SM00433">
    <property type="entry name" value="TOP2c"/>
    <property type="match status" value="1"/>
</dbReference>
<dbReference type="SUPFAM" id="SSF55874">
    <property type="entry name" value="ATPase domain of HSP90 chaperone/DNA topoisomerase II/histidine kinase"/>
    <property type="match status" value="1"/>
</dbReference>
<dbReference type="SUPFAM" id="SSF54211">
    <property type="entry name" value="Ribosomal protein S5 domain 2-like"/>
    <property type="match status" value="1"/>
</dbReference>
<dbReference type="SUPFAM" id="SSF56719">
    <property type="entry name" value="Type II DNA topoisomerase"/>
    <property type="match status" value="1"/>
</dbReference>
<dbReference type="PROSITE" id="PS00177">
    <property type="entry name" value="TOPOISOMERASE_II"/>
    <property type="match status" value="1"/>
</dbReference>
<dbReference type="PROSITE" id="PS50880">
    <property type="entry name" value="TOPRIM"/>
    <property type="match status" value="1"/>
</dbReference>